<gene>
    <name type="primary">swf1</name>
    <name type="ORF">AN1907</name>
</gene>
<name>SWF1_EMENI</name>
<evidence type="ECO:0000250" key="1"/>
<evidence type="ECO:0000255" key="2"/>
<evidence type="ECO:0000255" key="3">
    <source>
        <dbReference type="PROSITE-ProRule" id="PRU00067"/>
    </source>
</evidence>
<evidence type="ECO:0000305" key="4"/>
<keyword id="KW-0012">Acyltransferase</keyword>
<keyword id="KW-0256">Endoplasmic reticulum</keyword>
<keyword id="KW-0449">Lipoprotein</keyword>
<keyword id="KW-0472">Membrane</keyword>
<keyword id="KW-0564">Palmitate</keyword>
<keyword id="KW-1185">Reference proteome</keyword>
<keyword id="KW-0808">Transferase</keyword>
<keyword id="KW-0812">Transmembrane</keyword>
<keyword id="KW-1133">Transmembrane helix</keyword>
<comment type="function">
    <text evidence="1">Palmitoyltransferase that targets several endosomal SNAREs. Palmitoylates the SNAREs at cysteine residues close to the cytoplasmic end of their transmembrane domain. May have a role in the cellular quality control of transmembrane domain-containing proteins (By similarity).</text>
</comment>
<comment type="catalytic activity">
    <reaction>
        <text>L-cysteinyl-[protein] + hexadecanoyl-CoA = S-hexadecanoyl-L-cysteinyl-[protein] + CoA</text>
        <dbReference type="Rhea" id="RHEA:36683"/>
        <dbReference type="Rhea" id="RHEA-COMP:10131"/>
        <dbReference type="Rhea" id="RHEA-COMP:11032"/>
        <dbReference type="ChEBI" id="CHEBI:29950"/>
        <dbReference type="ChEBI" id="CHEBI:57287"/>
        <dbReference type="ChEBI" id="CHEBI:57379"/>
        <dbReference type="ChEBI" id="CHEBI:74151"/>
        <dbReference type="EC" id="2.3.1.225"/>
    </reaction>
</comment>
<comment type="subcellular location">
    <subcellularLocation>
        <location evidence="1">Endoplasmic reticulum membrane</location>
        <topology evidence="1">Multi-pass membrane protein</topology>
    </subcellularLocation>
</comment>
<comment type="domain">
    <text evidence="1">The DHHC domain is required for palmitoyltransferase activity.</text>
</comment>
<comment type="similarity">
    <text evidence="4">Belongs to the DHHC palmitoyltransferase family. SWF1 subfamily.</text>
</comment>
<sequence length="412" mass="47344">MGLLRTIALVILGFSAFIFTVLFGRLPVFRKTPIGLLHRIIWLHIPHGISYIDARLFNGRILRSWGQAGNYILYENHPLVLIFFTTILVIGELIFIPSAWPRISVMHQLYIPIIIALPYYFLYVSVVTKSYITPDNHAEEMKRYPYDKVIFHPGHSCETCHFLKPARSKHCSYCKRCVSRQDHHCIWLTNCVGLNNYHYFLYLLLSLSVMLTYGSWLGYSLLSQTLDRLIPPSSPVRLRKQSWPTFLNMWAAVVAYDTRIGGVTMLMFMTAPLAFAFLVYHVYLIWAGMTTNESAKWSDWKDDITDGMAFKFIGDHKRSDSPLLESAETADSWPGYSDQILVLTEGDPPKEGHQVHKSSNDVIQPTNPDAPIDRRFARVRSMKEIDNIYDLGFWNNLCHVFGNYAAGKAHRA</sequence>
<proteinExistence type="inferred from homology"/>
<reference key="1">
    <citation type="journal article" date="2005" name="Nature">
        <title>Sequencing of Aspergillus nidulans and comparative analysis with A. fumigatus and A. oryzae.</title>
        <authorList>
            <person name="Galagan J.E."/>
            <person name="Calvo S.E."/>
            <person name="Cuomo C."/>
            <person name="Ma L.-J."/>
            <person name="Wortman J.R."/>
            <person name="Batzoglou S."/>
            <person name="Lee S.-I."/>
            <person name="Bastuerkmen M."/>
            <person name="Spevak C.C."/>
            <person name="Clutterbuck J."/>
            <person name="Kapitonov V."/>
            <person name="Jurka J."/>
            <person name="Scazzocchio C."/>
            <person name="Farman M.L."/>
            <person name="Butler J."/>
            <person name="Purcell S."/>
            <person name="Harris S."/>
            <person name="Braus G.H."/>
            <person name="Draht O."/>
            <person name="Busch S."/>
            <person name="D'Enfert C."/>
            <person name="Bouchier C."/>
            <person name="Goldman G.H."/>
            <person name="Bell-Pedersen D."/>
            <person name="Griffiths-Jones S."/>
            <person name="Doonan J.H."/>
            <person name="Yu J."/>
            <person name="Vienken K."/>
            <person name="Pain A."/>
            <person name="Freitag M."/>
            <person name="Selker E.U."/>
            <person name="Archer D.B."/>
            <person name="Penalva M.A."/>
            <person name="Oakley B.R."/>
            <person name="Momany M."/>
            <person name="Tanaka T."/>
            <person name="Kumagai T."/>
            <person name="Asai K."/>
            <person name="Machida M."/>
            <person name="Nierman W.C."/>
            <person name="Denning D.W."/>
            <person name="Caddick M.X."/>
            <person name="Hynes M."/>
            <person name="Paoletti M."/>
            <person name="Fischer R."/>
            <person name="Miller B.L."/>
            <person name="Dyer P.S."/>
            <person name="Sachs M.S."/>
            <person name="Osmani S.A."/>
            <person name="Birren B.W."/>
        </authorList>
    </citation>
    <scope>NUCLEOTIDE SEQUENCE [LARGE SCALE GENOMIC DNA]</scope>
    <source>
        <strain>FGSC A4 / ATCC 38163 / CBS 112.46 / NRRL 194 / M139</strain>
    </source>
</reference>
<reference key="2">
    <citation type="journal article" date="2009" name="Fungal Genet. Biol.">
        <title>The 2008 update of the Aspergillus nidulans genome annotation: a community effort.</title>
        <authorList>
            <person name="Wortman J.R."/>
            <person name="Gilsenan J.M."/>
            <person name="Joardar V."/>
            <person name="Deegan J."/>
            <person name="Clutterbuck J."/>
            <person name="Andersen M.R."/>
            <person name="Archer D."/>
            <person name="Bencina M."/>
            <person name="Braus G."/>
            <person name="Coutinho P."/>
            <person name="von Dohren H."/>
            <person name="Doonan J."/>
            <person name="Driessen A.J."/>
            <person name="Durek P."/>
            <person name="Espeso E."/>
            <person name="Fekete E."/>
            <person name="Flipphi M."/>
            <person name="Estrada C.G."/>
            <person name="Geysens S."/>
            <person name="Goldman G."/>
            <person name="de Groot P.W."/>
            <person name="Hansen K."/>
            <person name="Harris S.D."/>
            <person name="Heinekamp T."/>
            <person name="Helmstaedt K."/>
            <person name="Henrissat B."/>
            <person name="Hofmann G."/>
            <person name="Homan T."/>
            <person name="Horio T."/>
            <person name="Horiuchi H."/>
            <person name="James S."/>
            <person name="Jones M."/>
            <person name="Karaffa L."/>
            <person name="Karanyi Z."/>
            <person name="Kato M."/>
            <person name="Keller N."/>
            <person name="Kelly D.E."/>
            <person name="Kiel J.A."/>
            <person name="Kim J.M."/>
            <person name="van der Klei I.J."/>
            <person name="Klis F.M."/>
            <person name="Kovalchuk A."/>
            <person name="Krasevec N."/>
            <person name="Kubicek C.P."/>
            <person name="Liu B."/>
            <person name="Maccabe A."/>
            <person name="Meyer V."/>
            <person name="Mirabito P."/>
            <person name="Miskei M."/>
            <person name="Mos M."/>
            <person name="Mullins J."/>
            <person name="Nelson D.R."/>
            <person name="Nielsen J."/>
            <person name="Oakley B.R."/>
            <person name="Osmani S.A."/>
            <person name="Pakula T."/>
            <person name="Paszewski A."/>
            <person name="Paulsen I."/>
            <person name="Pilsyk S."/>
            <person name="Pocsi I."/>
            <person name="Punt P.J."/>
            <person name="Ram A.F."/>
            <person name="Ren Q."/>
            <person name="Robellet X."/>
            <person name="Robson G."/>
            <person name="Seiboth B."/>
            <person name="van Solingen P."/>
            <person name="Specht T."/>
            <person name="Sun J."/>
            <person name="Taheri-Talesh N."/>
            <person name="Takeshita N."/>
            <person name="Ussery D."/>
            <person name="vanKuyk P.A."/>
            <person name="Visser H."/>
            <person name="van de Vondervoort P.J."/>
            <person name="de Vries R.P."/>
            <person name="Walton J."/>
            <person name="Xiang X."/>
            <person name="Xiong Y."/>
            <person name="Zeng A.P."/>
            <person name="Brandt B.W."/>
            <person name="Cornell M.J."/>
            <person name="van den Hondel C.A."/>
            <person name="Visser J."/>
            <person name="Oliver S.G."/>
            <person name="Turner G."/>
        </authorList>
    </citation>
    <scope>GENOME REANNOTATION</scope>
    <source>
        <strain>FGSC A4 / ATCC 38163 / CBS 112.46 / NRRL 194 / M139</strain>
    </source>
</reference>
<organism>
    <name type="scientific">Emericella nidulans (strain FGSC A4 / ATCC 38163 / CBS 112.46 / NRRL 194 / M139)</name>
    <name type="common">Aspergillus nidulans</name>
    <dbReference type="NCBI Taxonomy" id="227321"/>
    <lineage>
        <taxon>Eukaryota</taxon>
        <taxon>Fungi</taxon>
        <taxon>Dikarya</taxon>
        <taxon>Ascomycota</taxon>
        <taxon>Pezizomycotina</taxon>
        <taxon>Eurotiomycetes</taxon>
        <taxon>Eurotiomycetidae</taxon>
        <taxon>Eurotiales</taxon>
        <taxon>Aspergillaceae</taxon>
        <taxon>Aspergillus</taxon>
        <taxon>Aspergillus subgen. Nidulantes</taxon>
    </lineage>
</organism>
<protein>
    <recommendedName>
        <fullName>Palmitoyltransferase swf1</fullName>
        <ecNumber>2.3.1.225</ecNumber>
    </recommendedName>
</protein>
<feature type="chain" id="PRO_0000212989" description="Palmitoyltransferase swf1">
    <location>
        <begin position="1"/>
        <end position="412"/>
    </location>
</feature>
<feature type="topological domain" description="Lumenal" evidence="2">
    <location>
        <begin position="1"/>
        <end position="2"/>
    </location>
</feature>
<feature type="transmembrane region" description="Helical" evidence="2">
    <location>
        <begin position="3"/>
        <end position="23"/>
    </location>
</feature>
<feature type="topological domain" description="Cytoplasmic" evidence="2">
    <location>
        <begin position="24"/>
        <end position="78"/>
    </location>
</feature>
<feature type="transmembrane region" description="Helical" evidence="2">
    <location>
        <begin position="79"/>
        <end position="99"/>
    </location>
</feature>
<feature type="topological domain" description="Lumenal" evidence="2">
    <location>
        <begin position="100"/>
        <end position="107"/>
    </location>
</feature>
<feature type="transmembrane region" description="Helical" evidence="2">
    <location>
        <begin position="108"/>
        <end position="128"/>
    </location>
</feature>
<feature type="topological domain" description="Cytoplasmic" evidence="2">
    <location>
        <begin position="129"/>
        <end position="198"/>
    </location>
</feature>
<feature type="transmembrane region" description="Helical" evidence="2">
    <location>
        <begin position="199"/>
        <end position="219"/>
    </location>
</feature>
<feature type="topological domain" description="Lumenal" evidence="2">
    <location>
        <begin position="220"/>
        <end position="265"/>
    </location>
</feature>
<feature type="transmembrane region" description="Helical" evidence="2">
    <location>
        <begin position="266"/>
        <end position="286"/>
    </location>
</feature>
<feature type="topological domain" description="Cytoplasmic" evidence="2">
    <location>
        <begin position="287"/>
        <end position="412"/>
    </location>
</feature>
<feature type="domain" description="DHHC" evidence="3">
    <location>
        <begin position="155"/>
        <end position="205"/>
    </location>
</feature>
<accession>Q5BC23</accession>
<accession>C8VKS7</accession>
<dbReference type="EC" id="2.3.1.225"/>
<dbReference type="EMBL" id="AACD01000029">
    <property type="protein sequence ID" value="EAA65072.1"/>
    <property type="molecule type" value="Genomic_DNA"/>
</dbReference>
<dbReference type="EMBL" id="BN001307">
    <property type="protein sequence ID" value="CBF85801.1"/>
    <property type="molecule type" value="Genomic_DNA"/>
</dbReference>
<dbReference type="RefSeq" id="XP_659511.1">
    <property type="nucleotide sequence ID" value="XM_654419.1"/>
</dbReference>
<dbReference type="FunCoup" id="Q5BC23">
    <property type="interactions" value="27"/>
</dbReference>
<dbReference type="STRING" id="227321.Q5BC23"/>
<dbReference type="EnsemblFungi" id="CBF85801">
    <property type="protein sequence ID" value="CBF85801"/>
    <property type="gene ID" value="ANIA_01907"/>
</dbReference>
<dbReference type="KEGG" id="ani:ANIA_01907"/>
<dbReference type="eggNOG" id="KOG1312">
    <property type="taxonomic scope" value="Eukaryota"/>
</dbReference>
<dbReference type="HOGENOM" id="CLU_042181_2_1_1"/>
<dbReference type="InParanoid" id="Q5BC23"/>
<dbReference type="OMA" id="HIYLIWA"/>
<dbReference type="OrthoDB" id="9909019at2759"/>
<dbReference type="Proteomes" id="UP000000560">
    <property type="component" value="Chromosome VII"/>
</dbReference>
<dbReference type="GO" id="GO:0005783">
    <property type="term" value="C:endoplasmic reticulum"/>
    <property type="evidence" value="ECO:0000318"/>
    <property type="project" value="GO_Central"/>
</dbReference>
<dbReference type="GO" id="GO:0005789">
    <property type="term" value="C:endoplasmic reticulum membrane"/>
    <property type="evidence" value="ECO:0007669"/>
    <property type="project" value="UniProtKB-SubCell"/>
</dbReference>
<dbReference type="GO" id="GO:0005794">
    <property type="term" value="C:Golgi apparatus"/>
    <property type="evidence" value="ECO:0000318"/>
    <property type="project" value="GO_Central"/>
</dbReference>
<dbReference type="GO" id="GO:0019706">
    <property type="term" value="F:protein-cysteine S-palmitoyltransferase activity"/>
    <property type="evidence" value="ECO:0000318"/>
    <property type="project" value="GO_Central"/>
</dbReference>
<dbReference type="GO" id="GO:0006612">
    <property type="term" value="P:protein targeting to membrane"/>
    <property type="evidence" value="ECO:0000318"/>
    <property type="project" value="GO_Central"/>
</dbReference>
<dbReference type="InterPro" id="IPR001594">
    <property type="entry name" value="Palmitoyltrfase_DHHC"/>
</dbReference>
<dbReference type="InterPro" id="IPR039859">
    <property type="entry name" value="PFA4/ZDH16/20/ERF2-like"/>
</dbReference>
<dbReference type="PANTHER" id="PTHR22883:SF480">
    <property type="entry name" value="PALMITOYLTRANSFERASE SWF1"/>
    <property type="match status" value="1"/>
</dbReference>
<dbReference type="PANTHER" id="PTHR22883">
    <property type="entry name" value="ZINC FINGER DHHC DOMAIN CONTAINING PROTEIN"/>
    <property type="match status" value="1"/>
</dbReference>
<dbReference type="Pfam" id="PF01529">
    <property type="entry name" value="DHHC"/>
    <property type="match status" value="1"/>
</dbReference>
<dbReference type="PROSITE" id="PS50216">
    <property type="entry name" value="DHHC"/>
    <property type="match status" value="1"/>
</dbReference>